<feature type="chain" id="PRO_0000255999" description="ATP-dependent RNA helicase DBP4">
    <location>
        <begin position="1"/>
        <end position="449"/>
    </location>
</feature>
<feature type="domain" description="Helicase ATP-binding" evidence="2">
    <location>
        <begin position="32"/>
        <end position="206"/>
    </location>
</feature>
<feature type="domain" description="Helicase C-terminal" evidence="3">
    <location>
        <begin position="228"/>
        <end position="378"/>
    </location>
</feature>
<feature type="short sequence motif" description="Q motif">
    <location>
        <begin position="1"/>
        <end position="29"/>
    </location>
</feature>
<feature type="short sequence motif" description="DEAD box">
    <location>
        <begin position="154"/>
        <end position="157"/>
    </location>
</feature>
<feature type="binding site" evidence="2">
    <location>
        <begin position="45"/>
        <end position="52"/>
    </location>
    <ligand>
        <name>ATP</name>
        <dbReference type="ChEBI" id="CHEBI:30616"/>
    </ligand>
</feature>
<keyword id="KW-0067">ATP-binding</keyword>
<keyword id="KW-0347">Helicase</keyword>
<keyword id="KW-0378">Hydrolase</keyword>
<keyword id="KW-0547">Nucleotide-binding</keyword>
<keyword id="KW-0539">Nucleus</keyword>
<keyword id="KW-1185">Reference proteome</keyword>
<keyword id="KW-0690">Ribosome biogenesis</keyword>
<keyword id="KW-0694">RNA-binding</keyword>
<keyword id="KW-0698">rRNA processing</keyword>
<evidence type="ECO:0000250" key="1"/>
<evidence type="ECO:0000255" key="2">
    <source>
        <dbReference type="PROSITE-ProRule" id="PRU00541"/>
    </source>
</evidence>
<evidence type="ECO:0000255" key="3">
    <source>
        <dbReference type="PROSITE-ProRule" id="PRU00542"/>
    </source>
</evidence>
<evidence type="ECO:0000305" key="4"/>
<proteinExistence type="inferred from homology"/>
<dbReference type="EC" id="3.6.4.13"/>
<dbReference type="EMBL" id="AL590449">
    <property type="protein sequence ID" value="CAD25888.2"/>
    <property type="molecule type" value="Genomic_DNA"/>
</dbReference>
<dbReference type="RefSeq" id="NP_586284.1">
    <property type="nucleotide sequence ID" value="NM_001042117.1"/>
</dbReference>
<dbReference type="SMR" id="Q8SR01"/>
<dbReference type="FunCoup" id="Q8SR01">
    <property type="interactions" value="363"/>
</dbReference>
<dbReference type="STRING" id="284813.Q8SR01"/>
<dbReference type="GeneID" id="859935"/>
<dbReference type="KEGG" id="ecu:ECU10_1680"/>
<dbReference type="VEuPathDB" id="MicrosporidiaDB:ECU10_1680"/>
<dbReference type="HOGENOM" id="CLU_003041_1_3_1"/>
<dbReference type="InParanoid" id="Q8SR01"/>
<dbReference type="OrthoDB" id="10259640at2759"/>
<dbReference type="Proteomes" id="UP000000819">
    <property type="component" value="Chromosome X"/>
</dbReference>
<dbReference type="GO" id="GO:0005730">
    <property type="term" value="C:nucleolus"/>
    <property type="evidence" value="ECO:0007669"/>
    <property type="project" value="UniProtKB-SubCell"/>
</dbReference>
<dbReference type="GO" id="GO:0005524">
    <property type="term" value="F:ATP binding"/>
    <property type="evidence" value="ECO:0007669"/>
    <property type="project" value="UniProtKB-KW"/>
</dbReference>
<dbReference type="GO" id="GO:0016887">
    <property type="term" value="F:ATP hydrolysis activity"/>
    <property type="evidence" value="ECO:0007669"/>
    <property type="project" value="RHEA"/>
</dbReference>
<dbReference type="GO" id="GO:0003723">
    <property type="term" value="F:RNA binding"/>
    <property type="evidence" value="ECO:0007669"/>
    <property type="project" value="UniProtKB-KW"/>
</dbReference>
<dbReference type="GO" id="GO:0003724">
    <property type="term" value="F:RNA helicase activity"/>
    <property type="evidence" value="ECO:0007669"/>
    <property type="project" value="UniProtKB-EC"/>
</dbReference>
<dbReference type="GO" id="GO:0006364">
    <property type="term" value="P:rRNA processing"/>
    <property type="evidence" value="ECO:0007669"/>
    <property type="project" value="UniProtKB-KW"/>
</dbReference>
<dbReference type="CDD" id="cd18787">
    <property type="entry name" value="SF2_C_DEAD"/>
    <property type="match status" value="1"/>
</dbReference>
<dbReference type="Gene3D" id="3.40.50.300">
    <property type="entry name" value="P-loop containing nucleotide triphosphate hydrolases"/>
    <property type="match status" value="2"/>
</dbReference>
<dbReference type="InterPro" id="IPR011545">
    <property type="entry name" value="DEAD/DEAH_box_helicase_dom"/>
</dbReference>
<dbReference type="InterPro" id="IPR014001">
    <property type="entry name" value="Helicase_ATP-bd"/>
</dbReference>
<dbReference type="InterPro" id="IPR001650">
    <property type="entry name" value="Helicase_C-like"/>
</dbReference>
<dbReference type="InterPro" id="IPR027417">
    <property type="entry name" value="P-loop_NTPase"/>
</dbReference>
<dbReference type="InterPro" id="IPR000629">
    <property type="entry name" value="RNA-helicase_DEAD-box_CS"/>
</dbReference>
<dbReference type="InterPro" id="IPR014014">
    <property type="entry name" value="RNA_helicase_DEAD_Q_motif"/>
</dbReference>
<dbReference type="PANTHER" id="PTHR24031">
    <property type="entry name" value="RNA HELICASE"/>
    <property type="match status" value="1"/>
</dbReference>
<dbReference type="Pfam" id="PF00270">
    <property type="entry name" value="DEAD"/>
    <property type="match status" value="1"/>
</dbReference>
<dbReference type="Pfam" id="PF00271">
    <property type="entry name" value="Helicase_C"/>
    <property type="match status" value="1"/>
</dbReference>
<dbReference type="SMART" id="SM00487">
    <property type="entry name" value="DEXDc"/>
    <property type="match status" value="1"/>
</dbReference>
<dbReference type="SMART" id="SM00490">
    <property type="entry name" value="HELICc"/>
    <property type="match status" value="1"/>
</dbReference>
<dbReference type="SUPFAM" id="SSF52540">
    <property type="entry name" value="P-loop containing nucleoside triphosphate hydrolases"/>
    <property type="match status" value="1"/>
</dbReference>
<dbReference type="PROSITE" id="PS00039">
    <property type="entry name" value="DEAD_ATP_HELICASE"/>
    <property type="match status" value="1"/>
</dbReference>
<dbReference type="PROSITE" id="PS51192">
    <property type="entry name" value="HELICASE_ATP_BIND_1"/>
    <property type="match status" value="1"/>
</dbReference>
<dbReference type="PROSITE" id="PS51194">
    <property type="entry name" value="HELICASE_CTER"/>
    <property type="match status" value="1"/>
</dbReference>
<dbReference type="PROSITE" id="PS51195">
    <property type="entry name" value="Q_MOTIF"/>
    <property type="match status" value="1"/>
</dbReference>
<organism>
    <name type="scientific">Encephalitozoon cuniculi (strain GB-M1)</name>
    <name type="common">Microsporidian parasite</name>
    <dbReference type="NCBI Taxonomy" id="284813"/>
    <lineage>
        <taxon>Eukaryota</taxon>
        <taxon>Fungi</taxon>
        <taxon>Fungi incertae sedis</taxon>
        <taxon>Microsporidia</taxon>
        <taxon>Unikaryonidae</taxon>
        <taxon>Encephalitozoon</taxon>
    </lineage>
</organism>
<name>DBP4_ENCCU</name>
<sequence>MKFEDLKIDQRIEKGLRENGFVSMKEVQQKVIPMALEGHDIIGSSQTGTGKTLAFLVPTLQRLVSLGWGGGDGLGCLVITPTRELALQIFDVLSRIAKYTVLSTGLIMGGLEAEDELLKVNQMNILVCTPGRLLQHLQENPYLSTANVQILILDEADKMIEMGFKEVLEDILEYIPQKKQTLLFSATPKASTARILKLEDPRIISIYKEEGFPSQLRQYFYMMRTGDKINYLHTFIGSNPEVKGIVFFSTCKEVKFHCLLFERLKLRNRIFCLSGGMSQKQRIDVFKRFVKEKNGILFCTDLGSRGLDFPKVDVVIQYDCPCNVETYVHRVGRTARNSERGESYVYLVHGEEKLLTDIQKKGWIKKQEGMEDKGISEEITEGPGVQIRCINNMVKRLVRSSKELNEYCRKYLVTYEKFLTFSSKRYSEGVIRKIPALYEHFGVSRDQSH</sequence>
<reference key="1">
    <citation type="journal article" date="2001" name="Nature">
        <title>Genome sequence and gene compaction of the eukaryote parasite Encephalitozoon cuniculi.</title>
        <authorList>
            <person name="Katinka M.D."/>
            <person name="Duprat S."/>
            <person name="Cornillot E."/>
            <person name="Metenier G."/>
            <person name="Thomarat F."/>
            <person name="Prensier G."/>
            <person name="Barbe V."/>
            <person name="Peyretaillade E."/>
            <person name="Brottier P."/>
            <person name="Wincker P."/>
            <person name="Delbac F."/>
            <person name="El Alaoui H."/>
            <person name="Peyret P."/>
            <person name="Saurin W."/>
            <person name="Gouy M."/>
            <person name="Weissenbach J."/>
            <person name="Vivares C.P."/>
        </authorList>
    </citation>
    <scope>NUCLEOTIDE SEQUENCE [LARGE SCALE GENOMIC DNA]</scope>
    <source>
        <strain>GB-M1</strain>
    </source>
</reference>
<reference key="2">
    <citation type="journal article" date="2009" name="BMC Genomics">
        <title>Identification of transcriptional signals in Encephalitozoon cuniculi widespread among Microsporidia phylum: support for accurate structural genome annotation.</title>
        <authorList>
            <person name="Peyretaillade E."/>
            <person name="Goncalves O."/>
            <person name="Terrat S."/>
            <person name="Dugat-Bony E."/>
            <person name="Wincker P."/>
            <person name="Cornman R.S."/>
            <person name="Evans J.D."/>
            <person name="Delbac F."/>
            <person name="Peyret P."/>
        </authorList>
    </citation>
    <scope>GENOME REANNOTATION</scope>
    <source>
        <strain>GB-M1</strain>
    </source>
</reference>
<accession>Q8SR01</accession>
<gene>
    <name type="primary">DBP4</name>
    <name type="ordered locus">ECU10_1680</name>
</gene>
<protein>
    <recommendedName>
        <fullName>ATP-dependent RNA helicase DBP4</fullName>
        <ecNumber>3.6.4.13</ecNumber>
    </recommendedName>
</protein>
<comment type="function">
    <text evidence="1">ATP-dependent RNA helicase required for ribosome biogenesis. Involved in the release of U14 snoRNA in pre-ribosomal complexes. Required for pre-rRNA cleavage at site A2 (By similarity).</text>
</comment>
<comment type="catalytic activity">
    <reaction>
        <text>ATP + H2O = ADP + phosphate + H(+)</text>
        <dbReference type="Rhea" id="RHEA:13065"/>
        <dbReference type="ChEBI" id="CHEBI:15377"/>
        <dbReference type="ChEBI" id="CHEBI:15378"/>
        <dbReference type="ChEBI" id="CHEBI:30616"/>
        <dbReference type="ChEBI" id="CHEBI:43474"/>
        <dbReference type="ChEBI" id="CHEBI:456216"/>
        <dbReference type="EC" id="3.6.4.13"/>
    </reaction>
</comment>
<comment type="subunit">
    <text evidence="1">Interacts with the U3 and U14 snoRNAs. Associates with pre-ribosomal complexes (By similarity).</text>
</comment>
<comment type="subcellular location">
    <subcellularLocation>
        <location evidence="1">Nucleus</location>
        <location evidence="1">Nucleolus</location>
    </subcellularLocation>
</comment>
<comment type="domain">
    <text>The Q motif is unique to and characteristic of the DEAD box family of RNA helicases and controls ATP binding and hydrolysis.</text>
</comment>
<comment type="similarity">
    <text evidence="4">Belongs to the DEAD box helicase family. DDX10/DBP4 subfamily.</text>
</comment>